<gene>
    <name type="primary">y</name>
    <name type="ORF">GA17665</name>
</gene>
<accession>Q9BI18</accession>
<accession>Q29HC0</accession>
<feature type="signal peptide" evidence="2">
    <location>
        <begin position="1"/>
        <end position="30"/>
    </location>
</feature>
<feature type="chain" id="PRO_0000031053" description="Protein yellow">
    <location>
        <begin position="31"/>
        <end position="560"/>
    </location>
</feature>
<feature type="region of interest" description="Disordered" evidence="3">
    <location>
        <begin position="452"/>
        <end position="492"/>
    </location>
</feature>
<feature type="compositionally biased region" description="Low complexity" evidence="3">
    <location>
        <begin position="471"/>
        <end position="480"/>
    </location>
</feature>
<feature type="glycosylation site" description="N-linked (GlcNAc...) asparagine" evidence="2">
    <location>
        <position position="153"/>
    </location>
</feature>
<feature type="glycosylation site" description="N-linked (GlcNAc...) asparagine" evidence="2">
    <location>
        <position position="224"/>
    </location>
</feature>
<feature type="sequence conflict" description="In Ref. 1; CAC34737." evidence="4" ref="1">
    <original>A</original>
    <variation>L</variation>
    <location>
        <position position="11"/>
    </location>
</feature>
<organism>
    <name type="scientific">Drosophila pseudoobscura pseudoobscura</name>
    <name type="common">Fruit fly</name>
    <dbReference type="NCBI Taxonomy" id="46245"/>
    <lineage>
        <taxon>Eukaryota</taxon>
        <taxon>Metazoa</taxon>
        <taxon>Ecdysozoa</taxon>
        <taxon>Arthropoda</taxon>
        <taxon>Hexapoda</taxon>
        <taxon>Insecta</taxon>
        <taxon>Pterygota</taxon>
        <taxon>Neoptera</taxon>
        <taxon>Endopterygota</taxon>
        <taxon>Diptera</taxon>
        <taxon>Brachycera</taxon>
        <taxon>Muscomorpha</taxon>
        <taxon>Ephydroidea</taxon>
        <taxon>Drosophilidae</taxon>
        <taxon>Drosophila</taxon>
        <taxon>Sophophora</taxon>
    </lineage>
</organism>
<reference key="1">
    <citation type="journal article" date="2001" name="Mol. Biol. Evol.">
        <title>Changes in the recombinational environment affect divergence in the yellow gene of Drosophila.</title>
        <authorList>
            <person name="Munte A.B."/>
            <person name="Aguade M."/>
            <person name="Segarra C."/>
        </authorList>
    </citation>
    <scope>NUCLEOTIDE SEQUENCE [GENOMIC DNA]</scope>
</reference>
<reference key="2">
    <citation type="journal article" date="2005" name="Genome Res.">
        <title>Comparative genome sequencing of Drosophila pseudoobscura: chromosomal, gene, and cis-element evolution.</title>
        <authorList>
            <person name="Richards S."/>
            <person name="Liu Y."/>
            <person name="Bettencourt B.R."/>
            <person name="Hradecky P."/>
            <person name="Letovsky S."/>
            <person name="Nielsen R."/>
            <person name="Thornton K."/>
            <person name="Hubisz M.J."/>
            <person name="Chen R."/>
            <person name="Meisel R.P."/>
            <person name="Couronne O."/>
            <person name="Hua S."/>
            <person name="Smith M.A."/>
            <person name="Zhang P."/>
            <person name="Liu J."/>
            <person name="Bussemaker H.J."/>
            <person name="van Batenburg M.F."/>
            <person name="Howells S.L."/>
            <person name="Scherer S.E."/>
            <person name="Sodergren E."/>
            <person name="Matthews B.B."/>
            <person name="Crosby M.A."/>
            <person name="Schroeder A.J."/>
            <person name="Ortiz-Barrientos D."/>
            <person name="Rives C.M."/>
            <person name="Metzker M.L."/>
            <person name="Muzny D.M."/>
            <person name="Scott G."/>
            <person name="Steffen D."/>
            <person name="Wheeler D.A."/>
            <person name="Worley K.C."/>
            <person name="Havlak P."/>
            <person name="Durbin K.J."/>
            <person name="Egan A."/>
            <person name="Gill R."/>
            <person name="Hume J."/>
            <person name="Morgan M.B."/>
            <person name="Miner G."/>
            <person name="Hamilton C."/>
            <person name="Huang Y."/>
            <person name="Waldron L."/>
            <person name="Verduzco D."/>
            <person name="Clerc-Blankenburg K.P."/>
            <person name="Dubchak I."/>
            <person name="Noor M.A.F."/>
            <person name="Anderson W."/>
            <person name="White K.P."/>
            <person name="Clark A.G."/>
            <person name="Schaeffer S.W."/>
            <person name="Gelbart W.M."/>
            <person name="Weinstock G.M."/>
            <person name="Gibbs R.A."/>
        </authorList>
    </citation>
    <scope>NUCLEOTIDE SEQUENCE [LARGE SCALE GENOMIC DNA]</scope>
    <source>
        <strain>MV2-25 / Tucson 14011-0121.94</strain>
    </source>
</reference>
<name>YELL_DROPS</name>
<evidence type="ECO:0000250" key="1"/>
<evidence type="ECO:0000255" key="2"/>
<evidence type="ECO:0000256" key="3">
    <source>
        <dbReference type="SAM" id="MobiDB-lite"/>
    </source>
</evidence>
<evidence type="ECO:0000305" key="4"/>
<sequence>MHVQDKGGIGALTALSLLLVAVTMVTPTQAAYKLQERYSWNQLDFAFPNARLKEQAMASGDYIPQNALPVGVEHFGNRLFVTVPRWRDGIPATLTYINMDHSVTGSPELIPYPDWRANTAGDCANSITTAYRIKVDECGRLWVLDTGTVGIGNTTTNPCPYAVNVFDLTTNTRIRRYELPAADTNPNTFIANIAVDIGKNCDDAYAYFADELGYGLISYSWELNKSWRFSAHSYFFPDPLRGDFNVAGINFQWGEEGIFGMSLTPIRSDGYRTLYFSPLASHRQFAVSTRILRDETRIEDSYHDFVALDERGPNAHTTSRVMSDDGVELFNLIDQNAVGCWHSSMPYSPQFHGIVDRDDVGLVFPADVKIDENKNVWVLSDRMPVFLLSDLDYSDINFRIYTAPLATLIENTVCDLRNNAYGPPNTVSIPKQVGPGPRPGLSAVGPPLYTNQYRPVLPQKPQTSWGPSPPSRSYLPSLGASPGGPGQVVSSVSVSTNSVGPAGIEVPKAYVFNQHNGLNYETSGPHLFPTLQPTQSQVGGGLKTYVNARQSGWWHHQHQG</sequence>
<dbReference type="EMBL" id="AJ300666">
    <property type="protein sequence ID" value="CAC34737.1"/>
    <property type="molecule type" value="Genomic_DNA"/>
</dbReference>
<dbReference type="EMBL" id="CH379064">
    <property type="protein sequence ID" value="EAL31838.2"/>
    <property type="molecule type" value="Genomic_DNA"/>
</dbReference>
<dbReference type="RefSeq" id="XP_001354783.2">
    <property type="nucleotide sequence ID" value="XM_001354747.3"/>
</dbReference>
<dbReference type="SMR" id="Q9BI18"/>
<dbReference type="STRING" id="46245.Q9BI18"/>
<dbReference type="GlyCosmos" id="Q9BI18">
    <property type="glycosylation" value="2 sites, No reported glycans"/>
</dbReference>
<dbReference type="EnsemblMetazoa" id="FBtr0289584">
    <property type="protein sequence ID" value="FBpp0288022"/>
    <property type="gene ID" value="FBgn0013863"/>
</dbReference>
<dbReference type="GeneID" id="4815371"/>
<dbReference type="KEGG" id="dpo:4815371"/>
<dbReference type="CTD" id="30980"/>
<dbReference type="eggNOG" id="ENOG502QQ50">
    <property type="taxonomic scope" value="Eukaryota"/>
</dbReference>
<dbReference type="HOGENOM" id="CLU_031076_2_0_1"/>
<dbReference type="InParanoid" id="Q9BI18"/>
<dbReference type="OMA" id="LIENTVC"/>
<dbReference type="Proteomes" id="UP000001819">
    <property type="component" value="Chromosome X"/>
</dbReference>
<dbReference type="Bgee" id="FBgn0013863">
    <property type="expression patterns" value="Expressed in adult organism"/>
</dbReference>
<dbReference type="GO" id="GO:0005576">
    <property type="term" value="C:extracellular region"/>
    <property type="evidence" value="ECO:0007669"/>
    <property type="project" value="UniProtKB-SubCell"/>
</dbReference>
<dbReference type="FunFam" id="2.120.10.30:FF:000046">
    <property type="entry name" value="Blast:Protein yellow"/>
    <property type="match status" value="1"/>
</dbReference>
<dbReference type="Gene3D" id="2.120.10.30">
    <property type="entry name" value="TolB, C-terminal domain"/>
    <property type="match status" value="1"/>
</dbReference>
<dbReference type="InterPro" id="IPR011042">
    <property type="entry name" value="6-blade_b-propeller_TolB-like"/>
</dbReference>
<dbReference type="InterPro" id="IPR017996">
    <property type="entry name" value="Royal_jelly/protein_yellow"/>
</dbReference>
<dbReference type="PANTHER" id="PTHR10009:SF14">
    <property type="entry name" value="PROTEIN YELLOW"/>
    <property type="match status" value="1"/>
</dbReference>
<dbReference type="PANTHER" id="PTHR10009">
    <property type="entry name" value="PROTEIN YELLOW-RELATED"/>
    <property type="match status" value="1"/>
</dbReference>
<dbReference type="Pfam" id="PF03022">
    <property type="entry name" value="MRJP"/>
    <property type="match status" value="1"/>
</dbReference>
<dbReference type="PRINTS" id="PR01366">
    <property type="entry name" value="ROYALJELLY"/>
</dbReference>
<protein>
    <recommendedName>
        <fullName>Protein yellow</fullName>
    </recommendedName>
</protein>
<comment type="function">
    <text evidence="1">Controls the pigmentation pattern of the adult cuticle and larval mouth parts.</text>
</comment>
<comment type="subcellular location">
    <subcellularLocation>
        <location>Secreted</location>
    </subcellularLocation>
</comment>
<comment type="similarity">
    <text evidence="4">Belongs to the major royal jelly protein family.</text>
</comment>
<proteinExistence type="inferred from homology"/>
<keyword id="KW-0217">Developmental protein</keyword>
<keyword id="KW-0325">Glycoprotein</keyword>
<keyword id="KW-1185">Reference proteome</keyword>
<keyword id="KW-0964">Secreted</keyword>
<keyword id="KW-0732">Signal</keyword>